<reference key="1">
    <citation type="journal article" date="2006" name="PLoS Pathog.">
        <title>New perspectives on host-parasite interplay by comparative transcriptomic and proteomic analyses of Schistosoma japonicum.</title>
        <authorList>
            <person name="Liu F."/>
            <person name="Lu J."/>
            <person name="Hu W."/>
            <person name="Wang S.-Y."/>
            <person name="Cui S.-J."/>
            <person name="Chi M."/>
            <person name="Yan Q."/>
            <person name="Wang X.-R."/>
            <person name="Song H.-D."/>
            <person name="Xu X.-N."/>
            <person name="Wang J.-J."/>
            <person name="Zhang X.-L."/>
            <person name="Zhang X."/>
            <person name="Wang Z.-Q."/>
            <person name="Xue C.-L."/>
            <person name="Brindley P.J."/>
            <person name="McManus D.P."/>
            <person name="Yang P.-Y."/>
            <person name="Feng Z."/>
            <person name="Chen Z."/>
            <person name="Han Z.-G."/>
        </authorList>
    </citation>
    <scope>NUCLEOTIDE SEQUENCE [LARGE SCALE MRNA]</scope>
</reference>
<feature type="signal peptide" evidence="1">
    <location>
        <begin position="1"/>
        <end position="26"/>
    </location>
</feature>
<feature type="chain" id="PRO_0000311404" description="Uncharacterized protein SJCHGC06711">
    <location>
        <begin position="27"/>
        <end position="87"/>
    </location>
</feature>
<feature type="disulfide bond" evidence="2">
    <location>
        <begin position="61"/>
        <end position="75"/>
    </location>
</feature>
<feature type="disulfide bond" evidence="2">
    <location>
        <begin position="68"/>
        <end position="79"/>
    </location>
</feature>
<feature type="disulfide bond" evidence="2">
    <location>
        <begin position="74"/>
        <end position="84"/>
    </location>
</feature>
<protein>
    <recommendedName>
        <fullName>Uncharacterized protein SJCHGC06711</fullName>
    </recommendedName>
</protein>
<gene>
    <name type="ORF">SJCHGC06711</name>
</gene>
<organism>
    <name type="scientific">Schistosoma japonicum</name>
    <name type="common">Blood fluke</name>
    <dbReference type="NCBI Taxonomy" id="6182"/>
    <lineage>
        <taxon>Eukaryota</taxon>
        <taxon>Metazoa</taxon>
        <taxon>Spiralia</taxon>
        <taxon>Lophotrochozoa</taxon>
        <taxon>Platyhelminthes</taxon>
        <taxon>Trematoda</taxon>
        <taxon>Digenea</taxon>
        <taxon>Strigeidida</taxon>
        <taxon>Schistosomatoidea</taxon>
        <taxon>Schistosomatidae</taxon>
        <taxon>Schistosoma</taxon>
    </lineage>
</organism>
<proteinExistence type="inferred from homology"/>
<dbReference type="EMBL" id="AY915441">
    <property type="protein sequence ID" value="AAX30662.1"/>
    <property type="molecule type" value="mRNA"/>
</dbReference>
<dbReference type="GO" id="GO:0005576">
    <property type="term" value="C:extracellular region"/>
    <property type="evidence" value="ECO:0007669"/>
    <property type="project" value="UniProtKB-SubCell"/>
</dbReference>
<dbReference type="InterPro" id="IPR021712">
    <property type="entry name" value="UPF0506"/>
</dbReference>
<dbReference type="Pfam" id="PF11703">
    <property type="entry name" value="UPF0506"/>
    <property type="match status" value="1"/>
</dbReference>
<evidence type="ECO:0000255" key="1"/>
<evidence type="ECO:0000305" key="2"/>
<keyword id="KW-1015">Disulfide bond</keyword>
<keyword id="KW-0960">Knottin</keyword>
<keyword id="KW-0964">Secreted</keyword>
<keyword id="KW-0732">Signal</keyword>
<comment type="subcellular location">
    <subcellularLocation>
        <location evidence="2">Secreted</location>
    </subcellularLocation>
</comment>
<comment type="domain">
    <text evidence="2">The presence of a 'disulfide through disulfide knot' structurally defines this protein as a knottin.</text>
</comment>
<name>SJ711_SCHJA</name>
<sequence>MMSTQHFILSLTILIIISNLHDEVNACRELGEECVTRGPKSCCEPLICGLKSHGTGVCVKCIPGGSECKKSEDCCSKRCKSGYCKFK</sequence>
<accession>Q5BS23</accession>